<dbReference type="EC" id="6.1.1.19" evidence="2"/>
<dbReference type="EMBL" id="BC064888">
    <property type="protein sequence ID" value="AAH64888.1"/>
    <property type="molecule type" value="mRNA"/>
</dbReference>
<dbReference type="RefSeq" id="NP_989403.1">
    <property type="nucleotide sequence ID" value="NM_204072.1"/>
</dbReference>
<dbReference type="SMR" id="Q6P1S4"/>
<dbReference type="FunCoup" id="Q6P1S4">
    <property type="interactions" value="2633"/>
</dbReference>
<dbReference type="STRING" id="8364.ENSXETP00000029726"/>
<dbReference type="PaxDb" id="8364-ENSXETP00000054391"/>
<dbReference type="GeneID" id="395040"/>
<dbReference type="KEGG" id="xtr:395040"/>
<dbReference type="AGR" id="Xenbase:XB-GENE-955966"/>
<dbReference type="CTD" id="5917"/>
<dbReference type="Xenbase" id="XB-GENE-955966">
    <property type="gene designation" value="rars1"/>
</dbReference>
<dbReference type="eggNOG" id="KOG4426">
    <property type="taxonomic scope" value="Eukaryota"/>
</dbReference>
<dbReference type="HOGENOM" id="CLU_006406_5_1_1"/>
<dbReference type="InParanoid" id="Q6P1S4"/>
<dbReference type="OMA" id="NKPLHLG"/>
<dbReference type="OrthoDB" id="68056at2759"/>
<dbReference type="PhylomeDB" id="Q6P1S4"/>
<dbReference type="TreeFam" id="TF106111"/>
<dbReference type="Proteomes" id="UP000008143">
    <property type="component" value="Chromosome 3"/>
</dbReference>
<dbReference type="Bgee" id="ENSXETG00000025551">
    <property type="expression patterns" value="Expressed in testis and 16 other cell types or tissues"/>
</dbReference>
<dbReference type="GO" id="GO:0017101">
    <property type="term" value="C:aminoacyl-tRNA synthetase multienzyme complex"/>
    <property type="evidence" value="ECO:0000250"/>
    <property type="project" value="UniProtKB"/>
</dbReference>
<dbReference type="GO" id="GO:0005829">
    <property type="term" value="C:cytosol"/>
    <property type="evidence" value="ECO:0000250"/>
    <property type="project" value="UniProtKB"/>
</dbReference>
<dbReference type="GO" id="GO:0004814">
    <property type="term" value="F:arginine-tRNA ligase activity"/>
    <property type="evidence" value="ECO:0000250"/>
    <property type="project" value="UniProtKB"/>
</dbReference>
<dbReference type="GO" id="GO:0005524">
    <property type="term" value="F:ATP binding"/>
    <property type="evidence" value="ECO:0007669"/>
    <property type="project" value="UniProtKB-KW"/>
</dbReference>
<dbReference type="GO" id="GO:0006420">
    <property type="term" value="P:arginyl-tRNA aminoacylation"/>
    <property type="evidence" value="ECO:0000250"/>
    <property type="project" value="UniProtKB"/>
</dbReference>
<dbReference type="CDD" id="cd00671">
    <property type="entry name" value="ArgRS_core"/>
    <property type="match status" value="1"/>
</dbReference>
<dbReference type="FunFam" id="1.10.730.10:FF:000016">
    <property type="entry name" value="Arginine--tRNA ligase, cytoplasmic"/>
    <property type="match status" value="1"/>
</dbReference>
<dbReference type="FunFam" id="3.30.1360.70:FF:000002">
    <property type="entry name" value="arginine--tRNA ligase, cytoplasmic"/>
    <property type="match status" value="1"/>
</dbReference>
<dbReference type="FunFam" id="3.40.50.620:FF:000084">
    <property type="entry name" value="arginine--tRNA ligase, cytoplasmic"/>
    <property type="match status" value="1"/>
</dbReference>
<dbReference type="Gene3D" id="3.30.1360.70">
    <property type="entry name" value="Arginyl tRNA synthetase N-terminal domain"/>
    <property type="match status" value="1"/>
</dbReference>
<dbReference type="Gene3D" id="3.40.50.620">
    <property type="entry name" value="HUPs"/>
    <property type="match status" value="1"/>
</dbReference>
<dbReference type="Gene3D" id="1.10.730.10">
    <property type="entry name" value="Isoleucyl-tRNA Synthetase, Domain 1"/>
    <property type="match status" value="1"/>
</dbReference>
<dbReference type="HAMAP" id="MF_00123">
    <property type="entry name" value="Arg_tRNA_synth"/>
    <property type="match status" value="1"/>
</dbReference>
<dbReference type="InterPro" id="IPR001412">
    <property type="entry name" value="aa-tRNA-synth_I_CS"/>
</dbReference>
<dbReference type="InterPro" id="IPR001278">
    <property type="entry name" value="Arg-tRNA-ligase"/>
</dbReference>
<dbReference type="InterPro" id="IPR005148">
    <property type="entry name" value="Arg-tRNA-synth_N"/>
</dbReference>
<dbReference type="InterPro" id="IPR036695">
    <property type="entry name" value="Arg-tRNA-synth_N_sf"/>
</dbReference>
<dbReference type="InterPro" id="IPR035684">
    <property type="entry name" value="ArgRS_core"/>
</dbReference>
<dbReference type="InterPro" id="IPR008909">
    <property type="entry name" value="DALR_anticod-bd"/>
</dbReference>
<dbReference type="InterPro" id="IPR014729">
    <property type="entry name" value="Rossmann-like_a/b/a_fold"/>
</dbReference>
<dbReference type="InterPro" id="IPR009080">
    <property type="entry name" value="tRNAsynth_Ia_anticodon-bd"/>
</dbReference>
<dbReference type="NCBIfam" id="TIGR00456">
    <property type="entry name" value="argS"/>
    <property type="match status" value="1"/>
</dbReference>
<dbReference type="PANTHER" id="PTHR11956:SF5">
    <property type="entry name" value="ARGININE--TRNA LIGASE, CYTOPLASMIC"/>
    <property type="match status" value="1"/>
</dbReference>
<dbReference type="PANTHER" id="PTHR11956">
    <property type="entry name" value="ARGINYL-TRNA SYNTHETASE"/>
    <property type="match status" value="1"/>
</dbReference>
<dbReference type="Pfam" id="PF03485">
    <property type="entry name" value="Arg_tRNA_synt_N"/>
    <property type="match status" value="1"/>
</dbReference>
<dbReference type="Pfam" id="PF05746">
    <property type="entry name" value="DALR_1"/>
    <property type="match status" value="1"/>
</dbReference>
<dbReference type="Pfam" id="PF00750">
    <property type="entry name" value="tRNA-synt_1d"/>
    <property type="match status" value="1"/>
</dbReference>
<dbReference type="PRINTS" id="PR01038">
    <property type="entry name" value="TRNASYNTHARG"/>
</dbReference>
<dbReference type="SMART" id="SM01016">
    <property type="entry name" value="Arg_tRNA_synt_N"/>
    <property type="match status" value="1"/>
</dbReference>
<dbReference type="SMART" id="SM00836">
    <property type="entry name" value="DALR_1"/>
    <property type="match status" value="1"/>
</dbReference>
<dbReference type="SUPFAM" id="SSF47323">
    <property type="entry name" value="Anticodon-binding domain of a subclass of class I aminoacyl-tRNA synthetases"/>
    <property type="match status" value="1"/>
</dbReference>
<dbReference type="SUPFAM" id="SSF55190">
    <property type="entry name" value="Arginyl-tRNA synthetase (ArgRS), N-terminal 'additional' domain"/>
    <property type="match status" value="1"/>
</dbReference>
<dbReference type="SUPFAM" id="SSF52374">
    <property type="entry name" value="Nucleotidylyl transferase"/>
    <property type="match status" value="1"/>
</dbReference>
<dbReference type="PROSITE" id="PS00178">
    <property type="entry name" value="AA_TRNA_LIGASE_I"/>
    <property type="match status" value="1"/>
</dbReference>
<feature type="chain" id="PRO_0000250730" description="Arginine--tRNA ligase, cytoplasmic">
    <location>
        <begin position="1"/>
        <end position="660"/>
    </location>
</feature>
<feature type="region of interest" description="Could be involved in the assembly of the multisynthetase complex" evidence="1">
    <location>
        <begin position="1"/>
        <end position="72"/>
    </location>
</feature>
<feature type="region of interest" description="Interaction with tRNA" evidence="3">
    <location>
        <begin position="529"/>
        <end position="543"/>
    </location>
</feature>
<feature type="short sequence motif" description="'HIGH' region">
    <location>
        <begin position="201"/>
        <end position="212"/>
    </location>
</feature>
<feature type="binding site" evidence="2">
    <location>
        <begin position="200"/>
        <end position="202"/>
    </location>
    <ligand>
        <name>L-arginine</name>
        <dbReference type="ChEBI" id="CHEBI:32682"/>
    </ligand>
</feature>
<feature type="binding site" evidence="2">
    <location>
        <position position="211"/>
    </location>
    <ligand>
        <name>L-arginine</name>
        <dbReference type="ChEBI" id="CHEBI:32682"/>
    </ligand>
</feature>
<feature type="binding site" evidence="2">
    <location>
        <position position="384"/>
    </location>
    <ligand>
        <name>L-arginine</name>
        <dbReference type="ChEBI" id="CHEBI:32682"/>
    </ligand>
</feature>
<feature type="binding site" evidence="2">
    <location>
        <position position="388"/>
    </location>
    <ligand>
        <name>L-arginine</name>
        <dbReference type="ChEBI" id="CHEBI:32682"/>
    </ligand>
</feature>
<feature type="binding site" evidence="2">
    <location>
        <position position="412"/>
    </location>
    <ligand>
        <name>L-arginine</name>
        <dbReference type="ChEBI" id="CHEBI:32682"/>
    </ligand>
</feature>
<comment type="function">
    <text evidence="2">Forms part of a macromolecular complex that catalyzes the attachment of specific amino acids to cognate tRNAs during protein synthesis.</text>
</comment>
<comment type="catalytic activity">
    <reaction evidence="2">
        <text>tRNA(Arg) + L-arginine + ATP = L-arginyl-tRNA(Arg) + AMP + diphosphate</text>
        <dbReference type="Rhea" id="RHEA:20301"/>
        <dbReference type="Rhea" id="RHEA-COMP:9658"/>
        <dbReference type="Rhea" id="RHEA-COMP:9673"/>
        <dbReference type="ChEBI" id="CHEBI:30616"/>
        <dbReference type="ChEBI" id="CHEBI:32682"/>
        <dbReference type="ChEBI" id="CHEBI:33019"/>
        <dbReference type="ChEBI" id="CHEBI:78442"/>
        <dbReference type="ChEBI" id="CHEBI:78513"/>
        <dbReference type="ChEBI" id="CHEBI:456215"/>
        <dbReference type="EC" id="6.1.1.19"/>
    </reaction>
</comment>
<comment type="subunit">
    <text evidence="1">Monomer; also part of a multisubunit complex that groups tRNA ligases for Arg, Asp, Glu, Gln, Ile, Leu, Lys, Met and Pro.</text>
</comment>
<comment type="subcellular location">
    <subcellularLocation>
        <location evidence="2">Cytoplasm</location>
    </subcellularLocation>
    <subcellularLocation>
        <location evidence="2">Cytoplasm</location>
        <location evidence="2">Cytosol</location>
    </subcellularLocation>
</comment>
<comment type="domain">
    <text evidence="2">The alpha-helical N-terminus (residues 1-72) mediates interaction with AIMP1 and thereby contributes to the assembly of the multisynthetase complex.</text>
</comment>
<comment type="similarity">
    <text evidence="4">Belongs to the class-I aminoacyl-tRNA synthetase family.</text>
</comment>
<protein>
    <recommendedName>
        <fullName>Arginine--tRNA ligase, cytoplasmic</fullName>
        <ecNumber evidence="2">6.1.1.19</ecNumber>
    </recommendedName>
    <alternativeName>
        <fullName>Arginyl-tRNA synthetase</fullName>
        <shortName>ArgRS</shortName>
    </alternativeName>
</protein>
<accession>Q6P1S4</accession>
<reference key="1">
    <citation type="submission" date="2004-01" db="EMBL/GenBank/DDBJ databases">
        <authorList>
            <consortium name="NIH - Xenopus Gene Collection (XGC) project"/>
        </authorList>
    </citation>
    <scope>NUCLEOTIDE SEQUENCE [LARGE SCALE MRNA]</scope>
    <source>
        <tissue>Embryo</tissue>
    </source>
</reference>
<organism>
    <name type="scientific">Xenopus tropicalis</name>
    <name type="common">Western clawed frog</name>
    <name type="synonym">Silurana tropicalis</name>
    <dbReference type="NCBI Taxonomy" id="8364"/>
    <lineage>
        <taxon>Eukaryota</taxon>
        <taxon>Metazoa</taxon>
        <taxon>Chordata</taxon>
        <taxon>Craniata</taxon>
        <taxon>Vertebrata</taxon>
        <taxon>Euteleostomi</taxon>
        <taxon>Amphibia</taxon>
        <taxon>Batrachia</taxon>
        <taxon>Anura</taxon>
        <taxon>Pipoidea</taxon>
        <taxon>Pipidae</taxon>
        <taxon>Xenopodinae</taxon>
        <taxon>Xenopus</taxon>
        <taxon>Silurana</taxon>
    </lineage>
</organism>
<name>SYRC_XENTR</name>
<keyword id="KW-0030">Aminoacyl-tRNA synthetase</keyword>
<keyword id="KW-0067">ATP-binding</keyword>
<keyword id="KW-0963">Cytoplasm</keyword>
<keyword id="KW-0436">Ligase</keyword>
<keyword id="KW-0547">Nucleotide-binding</keyword>
<keyword id="KW-0648">Protein biosynthesis</keyword>
<keyword id="KW-1185">Reference proteome</keyword>
<gene>
    <name type="primary">rars1</name>
    <name type="synonym">rars</name>
</gene>
<proteinExistence type="evidence at transcript level"/>
<evidence type="ECO:0000250" key="1"/>
<evidence type="ECO:0000250" key="2">
    <source>
        <dbReference type="UniProtKB" id="P54136"/>
    </source>
</evidence>
<evidence type="ECO:0000250" key="3">
    <source>
        <dbReference type="UniProtKB" id="Q05506"/>
    </source>
</evidence>
<evidence type="ECO:0000305" key="4"/>
<sequence>MELPVCFYEERLRQQETEIKSLAAEIERLKNCGFVSETPSLEGLREENAKLKYRLNILRKSLLEEKKKSSKSMININAQIQEIFGTAIGAAYPELQNAPLAVTPSQQPKFGDYQCNSAMAITQMLKAMNQKVSPREIADKIVKNIPTNELVEKVDIAGPGFINVHLHKDFTSKQISKLLVNGVQPPVIWERKKVVVDFSSPNIAKEMHVGHLRSTVIGDSICRLFEFVGHDVLRLNHLGDWGTQFGMLIAHLQDKFPDYLTVSPPIGDLQSFYKESKKRFDEDEEFKKRAYQCVVQLQNKTPNFIQAWNLICDVSRKEFQKIYDCLDISIIDRGESFYQDRMIGVVKEFEEKGLVQVDEGRKVVFPPGCSVPLTIVKSDGGFTYDTSDLAALKQRLQEEKADMIIYVIDSGQAIHMQNVFSAGRMIGWYDPKVTRIEHAGFGVVLGEDKKKFKTRSGDTVRLIDLLDEGLKRSMEKLKDKGRDKVLTAEELLAAQTSVAFGCIKYADLSHNRMNDYIFSFDKMLDDRGNTAAYLLYAYTRIRSIARLANISDEDLHKAAKETEIILEHEKEWKLSKCILRFPEILQKILDDLLLHTLCDYLYELATTFTEFYDNCYCVEKDRQTGQIVKVNMSRLLLCDATAAVMAKGFDILGIKPVQKM</sequence>